<name>AT8B4_HUMAN</name>
<keyword id="KW-0067">ATP-binding</keyword>
<keyword id="KW-1003">Cell membrane</keyword>
<keyword id="KW-0333">Golgi apparatus</keyword>
<keyword id="KW-0445">Lipid transport</keyword>
<keyword id="KW-0460">Magnesium</keyword>
<keyword id="KW-0472">Membrane</keyword>
<keyword id="KW-0479">Metal-binding</keyword>
<keyword id="KW-0547">Nucleotide-binding</keyword>
<keyword id="KW-1267">Proteomics identification</keyword>
<keyword id="KW-1185">Reference proteome</keyword>
<keyword id="KW-1278">Translocase</keyword>
<keyword id="KW-0812">Transmembrane</keyword>
<keyword id="KW-1133">Transmembrane helix</keyword>
<keyword id="KW-0813">Transport</keyword>
<feature type="chain" id="PRO_0000046368" description="Probable phospholipid-transporting ATPase IM">
    <location>
        <begin position="1"/>
        <end position="1192"/>
    </location>
</feature>
<feature type="topological domain" description="Cytoplasmic" evidence="4">
    <location>
        <begin position="1"/>
        <end position="44"/>
    </location>
</feature>
<feature type="transmembrane region" description="Helical" evidence="4">
    <location>
        <begin position="45"/>
        <end position="66"/>
    </location>
</feature>
<feature type="topological domain" description="Exoplasmic loop" evidence="4">
    <location>
        <begin position="67"/>
        <end position="72"/>
    </location>
</feature>
<feature type="transmembrane region" description="Helical" evidence="4">
    <location>
        <begin position="73"/>
        <end position="92"/>
    </location>
</feature>
<feature type="topological domain" description="Cytoplasmic" evidence="4">
    <location>
        <begin position="93"/>
        <end position="276"/>
    </location>
</feature>
<feature type="transmembrane region" description="Helical" evidence="4">
    <location>
        <begin position="277"/>
        <end position="298"/>
    </location>
</feature>
<feature type="topological domain" description="Exoplasmic loop" evidence="4">
    <location>
        <begin position="299"/>
        <end position="327"/>
    </location>
</feature>
<feature type="transmembrane region" description="Helical" evidence="4">
    <location>
        <begin position="328"/>
        <end position="349"/>
    </location>
</feature>
<feature type="topological domain" description="Cytoplasmic" evidence="4">
    <location>
        <begin position="350"/>
        <end position="871"/>
    </location>
</feature>
<feature type="transmembrane region" description="Helical" evidence="4">
    <location>
        <begin position="872"/>
        <end position="892"/>
    </location>
</feature>
<feature type="topological domain" description="Exoplasmic loop" evidence="4">
    <location>
        <begin position="893"/>
        <end position="904"/>
    </location>
</feature>
<feature type="transmembrane region" description="Helical" evidence="4">
    <location>
        <begin position="905"/>
        <end position="924"/>
    </location>
</feature>
<feature type="topological domain" description="Cytoplasmic" evidence="4">
    <location>
        <begin position="925"/>
        <end position="954"/>
    </location>
</feature>
<feature type="transmembrane region" description="Helical" evidence="4">
    <location>
        <begin position="955"/>
        <end position="976"/>
    </location>
</feature>
<feature type="topological domain" description="Exoplasmic loop" evidence="4">
    <location>
        <begin position="977"/>
        <end position="990"/>
    </location>
</feature>
<feature type="transmembrane region" description="Helical" evidence="4">
    <location>
        <begin position="991"/>
        <end position="1013"/>
    </location>
</feature>
<feature type="topological domain" description="Cytoplasmic" evidence="4">
    <location>
        <begin position="1014"/>
        <end position="1019"/>
    </location>
</feature>
<feature type="transmembrane region" description="Helical" evidence="4">
    <location>
        <begin position="1020"/>
        <end position="1040"/>
    </location>
</feature>
<feature type="topological domain" description="Exoplasmic loop" evidence="4">
    <location>
        <begin position="1041"/>
        <end position="1060"/>
    </location>
</feature>
<feature type="transmembrane region" description="Helical" evidence="4">
    <location>
        <begin position="1061"/>
        <end position="1085"/>
    </location>
</feature>
<feature type="topological domain" description="Cytoplasmic" evidence="4">
    <location>
        <begin position="1086"/>
        <end position="1192"/>
    </location>
</feature>
<feature type="region of interest" description="Disordered" evidence="5">
    <location>
        <begin position="1104"/>
        <end position="1130"/>
    </location>
</feature>
<feature type="region of interest" description="Disordered" evidence="5">
    <location>
        <begin position="1143"/>
        <end position="1163"/>
    </location>
</feature>
<feature type="compositionally biased region" description="Basic residues" evidence="5">
    <location>
        <begin position="1104"/>
        <end position="1125"/>
    </location>
</feature>
<feature type="active site" description="4-aspartylphosphate intermediate" evidence="3">
    <location>
        <position position="392"/>
    </location>
</feature>
<feature type="binding site" evidence="3">
    <location>
        <position position="392"/>
    </location>
    <ligand>
        <name>ATP</name>
        <dbReference type="ChEBI" id="CHEBI:30616"/>
    </ligand>
</feature>
<feature type="binding site" evidence="3">
    <location>
        <position position="392"/>
    </location>
    <ligand>
        <name>Mg(2+)</name>
        <dbReference type="ChEBI" id="CHEBI:18420"/>
    </ligand>
</feature>
<feature type="binding site" evidence="3">
    <location>
        <position position="393"/>
    </location>
    <ligand>
        <name>ATP</name>
        <dbReference type="ChEBI" id="CHEBI:30616"/>
    </ligand>
</feature>
<feature type="binding site" evidence="3">
    <location>
        <position position="394"/>
    </location>
    <ligand>
        <name>ATP</name>
        <dbReference type="ChEBI" id="CHEBI:30616"/>
    </ligand>
</feature>
<feature type="binding site" evidence="3">
    <location>
        <position position="394"/>
    </location>
    <ligand>
        <name>Mg(2+)</name>
        <dbReference type="ChEBI" id="CHEBI:18420"/>
    </ligand>
</feature>
<feature type="binding site" evidence="1">
    <location>
        <position position="496"/>
    </location>
    <ligand>
        <name>ATP</name>
        <dbReference type="ChEBI" id="CHEBI:30616"/>
    </ligand>
</feature>
<feature type="binding site" evidence="3">
    <location>
        <position position="537"/>
    </location>
    <ligand>
        <name>ATP</name>
        <dbReference type="ChEBI" id="CHEBI:30616"/>
    </ligand>
</feature>
<feature type="binding site" evidence="1">
    <location>
        <position position="560"/>
    </location>
    <ligand>
        <name>ATP</name>
        <dbReference type="ChEBI" id="CHEBI:30616"/>
    </ligand>
</feature>
<feature type="binding site" evidence="1">
    <location>
        <position position="594"/>
    </location>
    <ligand>
        <name>ATP</name>
        <dbReference type="ChEBI" id="CHEBI:30616"/>
    </ligand>
</feature>
<feature type="binding site" evidence="1">
    <location>
        <position position="674"/>
    </location>
    <ligand>
        <name>ATP</name>
        <dbReference type="ChEBI" id="CHEBI:30616"/>
    </ligand>
</feature>
<feature type="binding site" evidence="1">
    <location>
        <position position="675"/>
    </location>
    <ligand>
        <name>ATP</name>
        <dbReference type="ChEBI" id="CHEBI:30616"/>
    </ligand>
</feature>
<feature type="binding site" evidence="1">
    <location>
        <position position="676"/>
    </location>
    <ligand>
        <name>ATP</name>
        <dbReference type="ChEBI" id="CHEBI:30616"/>
    </ligand>
</feature>
<feature type="binding site" evidence="1">
    <location>
        <position position="789"/>
    </location>
    <ligand>
        <name>ATP</name>
        <dbReference type="ChEBI" id="CHEBI:30616"/>
    </ligand>
</feature>
<feature type="binding site" evidence="1">
    <location>
        <position position="795"/>
    </location>
    <ligand>
        <name>ATP</name>
        <dbReference type="ChEBI" id="CHEBI:30616"/>
    </ligand>
</feature>
<feature type="binding site" evidence="3">
    <location>
        <position position="815"/>
    </location>
    <ligand>
        <name>Mg(2+)</name>
        <dbReference type="ChEBI" id="CHEBI:18420"/>
    </ligand>
</feature>
<feature type="binding site" evidence="3">
    <location>
        <position position="818"/>
    </location>
    <ligand>
        <name>ATP</name>
        <dbReference type="ChEBI" id="CHEBI:30616"/>
    </ligand>
</feature>
<feature type="binding site" evidence="3">
    <location>
        <position position="819"/>
    </location>
    <ligand>
        <name>ATP</name>
        <dbReference type="ChEBI" id="CHEBI:30616"/>
    </ligand>
</feature>
<feature type="binding site" evidence="2">
    <location>
        <position position="819"/>
    </location>
    <ligand>
        <name>Mg(2+)</name>
        <dbReference type="ChEBI" id="CHEBI:18420"/>
    </ligand>
</feature>
<feature type="sequence variant" id="VAR_046962" description="In dbSNP:rs16963151.">
    <original>N</original>
    <variation>S</variation>
    <location>
        <position position="225"/>
    </location>
</feature>
<feature type="sequence variant" id="VAR_046963" description="In dbSNP:rs2452524.">
    <original>H</original>
    <variation>N</variation>
    <location>
        <position position="452"/>
    </location>
</feature>
<feature type="sequence variant" id="VAR_046964" description="In dbSNP:rs16962989.">
    <original>N</original>
    <variation>K</variation>
    <location>
        <position position="1165"/>
    </location>
</feature>
<feature type="sequence variant" id="VAR_046965" description="In dbSNP:rs16962987.">
    <original>V</original>
    <variation>G</variation>
    <location>
        <position position="1190"/>
    </location>
</feature>
<feature type="sequence conflict" description="In Ref. 1; BAB85525." evidence="8" ref="1">
    <original>G</original>
    <variation>E</variation>
    <location>
        <position position="631"/>
    </location>
</feature>
<dbReference type="EC" id="7.6.2.1"/>
<dbReference type="EMBL" id="AB075819">
    <property type="protein sequence ID" value="BAB85525.1"/>
    <property type="status" value="ALT_SEQ"/>
    <property type="molecule type" value="mRNA"/>
</dbReference>
<dbReference type="EMBL" id="AC009753">
    <property type="status" value="NOT_ANNOTATED_CDS"/>
    <property type="molecule type" value="Genomic_DNA"/>
</dbReference>
<dbReference type="EMBL" id="AC016045">
    <property type="status" value="NOT_ANNOTATED_CDS"/>
    <property type="molecule type" value="Genomic_DNA"/>
</dbReference>
<dbReference type="EMBL" id="AC025040">
    <property type="status" value="NOT_ANNOTATED_CDS"/>
    <property type="molecule type" value="Genomic_DNA"/>
</dbReference>
<dbReference type="EMBL" id="AK025125">
    <property type="protein sequence ID" value="BAB15072.1"/>
    <property type="status" value="ALT_FRAME"/>
    <property type="molecule type" value="mRNA"/>
</dbReference>
<dbReference type="CCDS" id="CCDS32238.1"/>
<dbReference type="RefSeq" id="NP_079113.2">
    <property type="nucleotide sequence ID" value="NM_024837.3"/>
</dbReference>
<dbReference type="RefSeq" id="XP_016878076.2">
    <property type="nucleotide sequence ID" value="XM_017022587.3"/>
</dbReference>
<dbReference type="RefSeq" id="XP_016878081.1">
    <property type="nucleotide sequence ID" value="XM_017022592.1"/>
</dbReference>
<dbReference type="RefSeq" id="XP_047289039.1">
    <property type="nucleotide sequence ID" value="XM_047433083.1"/>
</dbReference>
<dbReference type="SMR" id="Q8TF62"/>
<dbReference type="BioGRID" id="122979">
    <property type="interactions" value="13"/>
</dbReference>
<dbReference type="ComplexPortal" id="CPX-6305">
    <property type="entry name" value="ATP8B4-CDC50A P4-ATPase complex"/>
</dbReference>
<dbReference type="ComplexPortal" id="CPX-6306">
    <property type="entry name" value="ATP8B4-CDC50B P4-ATPase complex"/>
</dbReference>
<dbReference type="FunCoup" id="Q8TF62">
    <property type="interactions" value="229"/>
</dbReference>
<dbReference type="IntAct" id="Q8TF62">
    <property type="interactions" value="5"/>
</dbReference>
<dbReference type="STRING" id="9606.ENSP00000284509"/>
<dbReference type="GlyGen" id="Q8TF62">
    <property type="glycosylation" value="2 sites, 1 O-linked glycan (1 site)"/>
</dbReference>
<dbReference type="iPTMnet" id="Q8TF62"/>
<dbReference type="PhosphoSitePlus" id="Q8TF62"/>
<dbReference type="BioMuta" id="ATP8B4"/>
<dbReference type="DMDM" id="209572761"/>
<dbReference type="jPOST" id="Q8TF62"/>
<dbReference type="MassIVE" id="Q8TF62"/>
<dbReference type="PaxDb" id="9606-ENSP00000284509"/>
<dbReference type="PeptideAtlas" id="Q8TF62"/>
<dbReference type="ProteomicsDB" id="74562"/>
<dbReference type="Antibodypedia" id="24681">
    <property type="antibodies" value="28 antibodies from 9 providers"/>
</dbReference>
<dbReference type="DNASU" id="79895"/>
<dbReference type="Ensembl" id="ENST00000284509.11">
    <property type="protein sequence ID" value="ENSP00000284509.6"/>
    <property type="gene ID" value="ENSG00000104043.15"/>
</dbReference>
<dbReference type="Ensembl" id="ENST00000559829.5">
    <property type="protein sequence ID" value="ENSP00000453169.1"/>
    <property type="gene ID" value="ENSG00000104043.15"/>
</dbReference>
<dbReference type="GeneID" id="79895"/>
<dbReference type="KEGG" id="hsa:79895"/>
<dbReference type="MANE-Select" id="ENST00000284509.11">
    <property type="protein sequence ID" value="ENSP00000284509.6"/>
    <property type="RefSeq nucleotide sequence ID" value="NM_024837.4"/>
    <property type="RefSeq protein sequence ID" value="NP_079113.2"/>
</dbReference>
<dbReference type="UCSC" id="uc001zxu.4">
    <property type="organism name" value="human"/>
</dbReference>
<dbReference type="AGR" id="HGNC:13536"/>
<dbReference type="CTD" id="79895"/>
<dbReference type="DisGeNET" id="79895"/>
<dbReference type="GeneCards" id="ATP8B4"/>
<dbReference type="HGNC" id="HGNC:13536">
    <property type="gene designation" value="ATP8B4"/>
</dbReference>
<dbReference type="HPA" id="ENSG00000104043">
    <property type="expression patterns" value="Tissue enriched (bone)"/>
</dbReference>
<dbReference type="MIM" id="609123">
    <property type="type" value="gene"/>
</dbReference>
<dbReference type="neXtProt" id="NX_Q8TF62"/>
<dbReference type="OpenTargets" id="ENSG00000104043"/>
<dbReference type="PharmGKB" id="PA25169"/>
<dbReference type="VEuPathDB" id="HostDB:ENSG00000104043"/>
<dbReference type="eggNOG" id="KOG0206">
    <property type="taxonomic scope" value="Eukaryota"/>
</dbReference>
<dbReference type="GeneTree" id="ENSGT00940000160101"/>
<dbReference type="HOGENOM" id="CLU_000846_3_2_1"/>
<dbReference type="InParanoid" id="Q8TF62"/>
<dbReference type="OMA" id="FNKHKFF"/>
<dbReference type="OrthoDB" id="377733at2759"/>
<dbReference type="PAN-GO" id="Q8TF62">
    <property type="GO annotations" value="5 GO annotations based on evolutionary models"/>
</dbReference>
<dbReference type="PhylomeDB" id="Q8TF62"/>
<dbReference type="TreeFam" id="TF300654"/>
<dbReference type="PathwayCommons" id="Q8TF62"/>
<dbReference type="Reactome" id="R-HSA-6798695">
    <property type="pathway name" value="Neutrophil degranulation"/>
</dbReference>
<dbReference type="Reactome" id="R-HSA-936837">
    <property type="pathway name" value="Ion transport by P-type ATPases"/>
</dbReference>
<dbReference type="SignaLink" id="Q8TF62"/>
<dbReference type="BioGRID-ORCS" id="79895">
    <property type="hits" value="14 hits in 1145 CRISPR screens"/>
</dbReference>
<dbReference type="ChiTaRS" id="ATP8B4">
    <property type="organism name" value="human"/>
</dbReference>
<dbReference type="GenomeRNAi" id="79895"/>
<dbReference type="Pharos" id="Q8TF62">
    <property type="development level" value="Tbio"/>
</dbReference>
<dbReference type="PRO" id="PR:Q8TF62"/>
<dbReference type="Proteomes" id="UP000005640">
    <property type="component" value="Chromosome 15"/>
</dbReference>
<dbReference type="RNAct" id="Q8TF62">
    <property type="molecule type" value="protein"/>
</dbReference>
<dbReference type="Bgee" id="ENSG00000104043">
    <property type="expression patterns" value="Expressed in bone marrow cell and 126 other cell types or tissues"/>
</dbReference>
<dbReference type="ExpressionAtlas" id="Q8TF62">
    <property type="expression patterns" value="baseline and differential"/>
</dbReference>
<dbReference type="GO" id="GO:0005794">
    <property type="term" value="C:Golgi apparatus"/>
    <property type="evidence" value="ECO:0000314"/>
    <property type="project" value="UniProtKB"/>
</dbReference>
<dbReference type="GO" id="GO:1990531">
    <property type="term" value="C:phospholipid-translocating ATPase complex"/>
    <property type="evidence" value="ECO:0000353"/>
    <property type="project" value="ComplexPortal"/>
</dbReference>
<dbReference type="GO" id="GO:0005886">
    <property type="term" value="C:plasma membrane"/>
    <property type="evidence" value="ECO:0000314"/>
    <property type="project" value="UniProtKB"/>
</dbReference>
<dbReference type="GO" id="GO:0035579">
    <property type="term" value="C:specific granule membrane"/>
    <property type="evidence" value="ECO:0000304"/>
    <property type="project" value="Reactome"/>
</dbReference>
<dbReference type="GO" id="GO:0070821">
    <property type="term" value="C:tertiary granule membrane"/>
    <property type="evidence" value="ECO:0000304"/>
    <property type="project" value="Reactome"/>
</dbReference>
<dbReference type="GO" id="GO:0005802">
    <property type="term" value="C:trans-Golgi network"/>
    <property type="evidence" value="ECO:0000318"/>
    <property type="project" value="GO_Central"/>
</dbReference>
<dbReference type="GO" id="GO:0005524">
    <property type="term" value="F:ATP binding"/>
    <property type="evidence" value="ECO:0007669"/>
    <property type="project" value="UniProtKB-KW"/>
</dbReference>
<dbReference type="GO" id="GO:0016887">
    <property type="term" value="F:ATP hydrolysis activity"/>
    <property type="evidence" value="ECO:0007669"/>
    <property type="project" value="InterPro"/>
</dbReference>
<dbReference type="GO" id="GO:0140326">
    <property type="term" value="F:ATPase-coupled intramembrane lipid transporter activity"/>
    <property type="evidence" value="ECO:0000318"/>
    <property type="project" value="GO_Central"/>
</dbReference>
<dbReference type="GO" id="GO:0000287">
    <property type="term" value="F:magnesium ion binding"/>
    <property type="evidence" value="ECO:0007669"/>
    <property type="project" value="InterPro"/>
</dbReference>
<dbReference type="GO" id="GO:0007030">
    <property type="term" value="P:Golgi organization"/>
    <property type="evidence" value="ECO:0000318"/>
    <property type="project" value="GO_Central"/>
</dbReference>
<dbReference type="GO" id="GO:0045332">
    <property type="term" value="P:phospholipid translocation"/>
    <property type="evidence" value="ECO:0000318"/>
    <property type="project" value="GO_Central"/>
</dbReference>
<dbReference type="CDD" id="cd02073">
    <property type="entry name" value="P-type_ATPase_APLT_Dnf-like"/>
    <property type="match status" value="1"/>
</dbReference>
<dbReference type="FunFam" id="2.70.150.10:FF:000025">
    <property type="entry name" value="Phospholipid-transporting ATPase"/>
    <property type="match status" value="1"/>
</dbReference>
<dbReference type="FunFam" id="3.40.1110.10:FF:000030">
    <property type="entry name" value="Phospholipid-transporting ATPase"/>
    <property type="match status" value="1"/>
</dbReference>
<dbReference type="FunFam" id="3.40.50.1000:FF:000014">
    <property type="entry name" value="Phospholipid-transporting ATPase"/>
    <property type="match status" value="1"/>
</dbReference>
<dbReference type="FunFam" id="3.40.50.1000:FF:000001">
    <property type="entry name" value="Phospholipid-transporting ATPase IC"/>
    <property type="match status" value="1"/>
</dbReference>
<dbReference type="Gene3D" id="3.40.1110.10">
    <property type="entry name" value="Calcium-transporting ATPase, cytoplasmic domain N"/>
    <property type="match status" value="1"/>
</dbReference>
<dbReference type="Gene3D" id="2.70.150.10">
    <property type="entry name" value="Calcium-transporting ATPase, cytoplasmic transduction domain A"/>
    <property type="match status" value="1"/>
</dbReference>
<dbReference type="Gene3D" id="3.40.50.1000">
    <property type="entry name" value="HAD superfamily/HAD-like"/>
    <property type="match status" value="1"/>
</dbReference>
<dbReference type="InterPro" id="IPR023299">
    <property type="entry name" value="ATPase_P-typ_cyto_dom_N"/>
</dbReference>
<dbReference type="InterPro" id="IPR018303">
    <property type="entry name" value="ATPase_P-typ_P_site"/>
</dbReference>
<dbReference type="InterPro" id="IPR023298">
    <property type="entry name" value="ATPase_P-typ_TM_dom_sf"/>
</dbReference>
<dbReference type="InterPro" id="IPR008250">
    <property type="entry name" value="ATPase_P-typ_transduc_dom_A_sf"/>
</dbReference>
<dbReference type="InterPro" id="IPR036412">
    <property type="entry name" value="HAD-like_sf"/>
</dbReference>
<dbReference type="InterPro" id="IPR023214">
    <property type="entry name" value="HAD_sf"/>
</dbReference>
<dbReference type="InterPro" id="IPR006539">
    <property type="entry name" value="P-type_ATPase_IV"/>
</dbReference>
<dbReference type="InterPro" id="IPR032631">
    <property type="entry name" value="P-type_ATPase_N"/>
</dbReference>
<dbReference type="InterPro" id="IPR001757">
    <property type="entry name" value="P_typ_ATPase"/>
</dbReference>
<dbReference type="InterPro" id="IPR032630">
    <property type="entry name" value="P_typ_ATPase_c"/>
</dbReference>
<dbReference type="InterPro" id="IPR044492">
    <property type="entry name" value="P_typ_ATPase_HD_dom"/>
</dbReference>
<dbReference type="NCBIfam" id="TIGR01652">
    <property type="entry name" value="ATPase-Plipid"/>
    <property type="match status" value="1"/>
</dbReference>
<dbReference type="NCBIfam" id="TIGR01494">
    <property type="entry name" value="ATPase_P-type"/>
    <property type="match status" value="2"/>
</dbReference>
<dbReference type="PANTHER" id="PTHR24092:SF80">
    <property type="entry name" value="PHOSPHOLIPID-TRANSPORTING ATPASE IM-RELATED"/>
    <property type="match status" value="1"/>
</dbReference>
<dbReference type="PANTHER" id="PTHR24092">
    <property type="entry name" value="PROBABLE PHOSPHOLIPID-TRANSPORTING ATPASE"/>
    <property type="match status" value="1"/>
</dbReference>
<dbReference type="Pfam" id="PF13246">
    <property type="entry name" value="Cation_ATPase"/>
    <property type="match status" value="1"/>
</dbReference>
<dbReference type="Pfam" id="PF16212">
    <property type="entry name" value="PhoLip_ATPase_C"/>
    <property type="match status" value="1"/>
</dbReference>
<dbReference type="Pfam" id="PF16209">
    <property type="entry name" value="PhoLip_ATPase_N"/>
    <property type="match status" value="1"/>
</dbReference>
<dbReference type="PRINTS" id="PR00119">
    <property type="entry name" value="CATATPASE"/>
</dbReference>
<dbReference type="SFLD" id="SFLDG00002">
    <property type="entry name" value="C1.7:_P-type_atpase_like"/>
    <property type="match status" value="1"/>
</dbReference>
<dbReference type="SFLD" id="SFLDF00027">
    <property type="entry name" value="p-type_atpase"/>
    <property type="match status" value="1"/>
</dbReference>
<dbReference type="SUPFAM" id="SSF81653">
    <property type="entry name" value="Calcium ATPase, transduction domain A"/>
    <property type="match status" value="1"/>
</dbReference>
<dbReference type="SUPFAM" id="SSF81665">
    <property type="entry name" value="Calcium ATPase, transmembrane domain M"/>
    <property type="match status" value="1"/>
</dbReference>
<dbReference type="SUPFAM" id="SSF56784">
    <property type="entry name" value="HAD-like"/>
    <property type="match status" value="1"/>
</dbReference>
<dbReference type="SUPFAM" id="SSF81660">
    <property type="entry name" value="Metal cation-transporting ATPase, ATP-binding domain N"/>
    <property type="match status" value="1"/>
</dbReference>
<dbReference type="PROSITE" id="PS00154">
    <property type="entry name" value="ATPASE_E1_E2"/>
    <property type="match status" value="1"/>
</dbReference>
<accession>Q8TF62</accession>
<accession>Q9H727</accession>
<organism>
    <name type="scientific">Homo sapiens</name>
    <name type="common">Human</name>
    <dbReference type="NCBI Taxonomy" id="9606"/>
    <lineage>
        <taxon>Eukaryota</taxon>
        <taxon>Metazoa</taxon>
        <taxon>Chordata</taxon>
        <taxon>Craniata</taxon>
        <taxon>Vertebrata</taxon>
        <taxon>Euteleostomi</taxon>
        <taxon>Mammalia</taxon>
        <taxon>Eutheria</taxon>
        <taxon>Euarchontoglires</taxon>
        <taxon>Primates</taxon>
        <taxon>Haplorrhini</taxon>
        <taxon>Catarrhini</taxon>
        <taxon>Hominidae</taxon>
        <taxon>Homo</taxon>
    </lineage>
</organism>
<sequence length="1192" mass="135868">MFCSEKKLREVERIVKANDREYNEKFQYADNRIHTSKYNILTFLPINLFEQFQRVANAYFLCLLILQLIPEISSLTWFTTIVPLVLVITMTAVKDATDDYFRHKSDNQVNNRQSEVLINSKLQNEKWMNVKVGDIIKLENNQFVAADLLLLSSSEPHGLCYVETAELDGETNLKVRHALSVTSELGADISRLAGFDGIVVCEVPNNKLDKFMGILSWKDSKHSLNNEKIILRGCILRNTSWCFGMVIFAGPDTKLMQNSGKTKFKRTSIDRLMNTLVLWIFGFLICLGIILAIGNSIWESQTGDQFRTFLFWNEGEKSSVFSGFLTFWSYIIILNTVVPISLYVSVEVIRLGHSYFINWDRKMYYSRKAIPAVARTTTLNEELGQIEYIFSDKTGTLTQNIMTFKRCSINGRIYGEVHDDLDQKTEITQEKEPVDFSVKSQADREFQFFDHHLMESIKMGDPKVHEFLRLLALCHTVMSEENSAGELIYQVQSPDEGALVTAARNFGFIFKSRTPETITIEELGTLVTYQLLAFLDFNNTRKRMSVIVRNPEGQIKLYSKGADTILFEKLHPSNEVLLSLTSDHLSEFAGEGLRTLAIAYRDLDDKYFKEWHKMLEDANAATEERDERIAGLYEEIERDLMLLGATAVEDKLQEGVIETVTSLSLANIKIWVLTGDKQETAINIGYACNMLTDDMNDVFVIAGNNAVEVREELRKAKQNLFGQNRNFSNGHVVCEKKQQLELDSIVEETITGDYALIINGHSLAHALESDVKNDLLELACMCKTVICCRVTPLQKAQVVELVKKYRNAVTLAIGDGANDVSMIKSAHIGVGISGQEGLQAVLASDYSFAQFRYLQRLLLVHGRWSYFRMCKFLCYFFYKNFAFTLVHFWFGFFCGFSAQTVYDQWFITLFNIVYTSLPVLAMGIFDQDVSDQNSVDCPQLYKPGQLNLLFNKRKFFICVLHGIYTSLVLFFIPYGAFYNVAGEDGQHIADYQSFAVTMATSLVIVVSVQIALDTSYWTFINHVFIWGSIAIYFSILFTMHSNGIFGIFPNQFPFVGNARHSLTQKCIWLVILLTTVASVMPVVAFRFLKVDLYPTLSDQIRRWQKAQKKARPPSSRRPRTRRSSSRRSGYAFAHQEGYGELITSGKNMRAKNPPPTSGLEKTHYNSTSWIENLCKKTTDTVSSFSQDKTVKL</sequence>
<comment type="function">
    <text evidence="8">Component of a P4-ATPase flippase complex which catalyzes the hydrolysis of ATP coupled to the transport of aminophospholipids from the outer to the inner leaflet of various membranes and ensures the maintenance of asymmetric distribution of phospholipids. Phospholipid translocation also seems to be implicated in vesicle formation and in uptake of lipid signaling molecules (Probable).</text>
</comment>
<comment type="catalytic activity">
    <reaction>
        <text>ATP + H2O + phospholipidSide 1 = ADP + phosphate + phospholipidSide 2.</text>
        <dbReference type="EC" id="7.6.2.1"/>
    </reaction>
</comment>
<comment type="cofactor">
    <cofactor evidence="3">
        <name>Mg(2+)</name>
        <dbReference type="ChEBI" id="CHEBI:18420"/>
    </cofactor>
</comment>
<comment type="subunit">
    <text evidence="6 7 8">Component of a P4-ATPase flippase complex which consists of a catalytic alpha subunit and an accessory beta subunit (Probable). Interacts with beta subunits TMEM30A and TMEM30B.</text>
</comment>
<comment type="interaction">
    <interactant intactId="EBI-9527207">
        <id>Q8TF62</id>
    </interactant>
    <interactant intactId="EBI-2836942">
        <id>Q9NV96</id>
        <label>TMEM30A</label>
    </interactant>
    <organismsDiffer>false</organismsDiffer>
    <experiments>4</experiments>
</comment>
<comment type="subcellular location">
    <subcellularLocation>
        <location evidence="6">Cell membrane</location>
        <topology evidence="6">Multi-pass membrane protein</topology>
    </subcellularLocation>
    <subcellularLocation>
        <location evidence="6">Golgi apparatus</location>
    </subcellularLocation>
</comment>
<comment type="tissue specificity">
    <text>Ubiquitously expressed at moderate levels.</text>
</comment>
<comment type="similarity">
    <text evidence="8">Belongs to the cation transport ATPase (P-type) (TC 3.A.3) family. Type IV subfamily.</text>
</comment>
<comment type="sequence caution" evidence="8">
    <conflict type="frameshift">
        <sequence resource="EMBL-CDS" id="BAB15072"/>
    </conflict>
</comment>
<comment type="sequence caution" evidence="8">
    <conflict type="miscellaneous discrepancy">
        <sequence resource="EMBL-CDS" id="BAB85525"/>
    </conflict>
    <text>Contaminating sequence. Sequence of unknown origin inserted in the coding sequence.</text>
</comment>
<evidence type="ECO:0000250" key="1">
    <source>
        <dbReference type="UniProtKB" id="P04191"/>
    </source>
</evidence>
<evidence type="ECO:0000250" key="2">
    <source>
        <dbReference type="UniProtKB" id="Q8NB49"/>
    </source>
</evidence>
<evidence type="ECO:0000250" key="3">
    <source>
        <dbReference type="UniProtKB" id="Q9Y2Q0"/>
    </source>
</evidence>
<evidence type="ECO:0000255" key="4"/>
<evidence type="ECO:0000256" key="5">
    <source>
        <dbReference type="SAM" id="MobiDB-lite"/>
    </source>
</evidence>
<evidence type="ECO:0000269" key="6">
    <source>
    </source>
</evidence>
<evidence type="ECO:0000269" key="7">
    <source>
    </source>
</evidence>
<evidence type="ECO:0000305" key="8"/>
<gene>
    <name type="primary">ATP8B4</name>
    <name type="synonym">KIAA1939</name>
</gene>
<reference key="1">
    <citation type="journal article" date="2001" name="DNA Res.">
        <title>Prediction of the coding sequences of unidentified human genes. XXII. The complete sequences of 50 new cDNA clones which code for large proteins.</title>
        <authorList>
            <person name="Nagase T."/>
            <person name="Kikuno R."/>
            <person name="Ohara O."/>
        </authorList>
    </citation>
    <scope>NUCLEOTIDE SEQUENCE [LARGE SCALE MRNA]</scope>
    <source>
        <tissue>Brain</tissue>
    </source>
</reference>
<reference key="2">
    <citation type="journal article" date="2006" name="Nature">
        <title>Analysis of the DNA sequence and duplication history of human chromosome 15.</title>
        <authorList>
            <person name="Zody M.C."/>
            <person name="Garber M."/>
            <person name="Sharpe T."/>
            <person name="Young S.K."/>
            <person name="Rowen L."/>
            <person name="O'Neill K."/>
            <person name="Whittaker C.A."/>
            <person name="Kamal M."/>
            <person name="Chang J.L."/>
            <person name="Cuomo C.A."/>
            <person name="Dewar K."/>
            <person name="FitzGerald M.G."/>
            <person name="Kodira C.D."/>
            <person name="Madan A."/>
            <person name="Qin S."/>
            <person name="Yang X."/>
            <person name="Abbasi N."/>
            <person name="Abouelleil A."/>
            <person name="Arachchi H.M."/>
            <person name="Baradarani L."/>
            <person name="Birditt B."/>
            <person name="Bloom S."/>
            <person name="Bloom T."/>
            <person name="Borowsky M.L."/>
            <person name="Burke J."/>
            <person name="Butler J."/>
            <person name="Cook A."/>
            <person name="DeArellano K."/>
            <person name="DeCaprio D."/>
            <person name="Dorris L. III"/>
            <person name="Dors M."/>
            <person name="Eichler E.E."/>
            <person name="Engels R."/>
            <person name="Fahey J."/>
            <person name="Fleetwood P."/>
            <person name="Friedman C."/>
            <person name="Gearin G."/>
            <person name="Hall J.L."/>
            <person name="Hensley G."/>
            <person name="Johnson E."/>
            <person name="Jones C."/>
            <person name="Kamat A."/>
            <person name="Kaur A."/>
            <person name="Locke D.P."/>
            <person name="Madan A."/>
            <person name="Munson G."/>
            <person name="Jaffe D.B."/>
            <person name="Lui A."/>
            <person name="Macdonald P."/>
            <person name="Mauceli E."/>
            <person name="Naylor J.W."/>
            <person name="Nesbitt R."/>
            <person name="Nicol R."/>
            <person name="O'Leary S.B."/>
            <person name="Ratcliffe A."/>
            <person name="Rounsley S."/>
            <person name="She X."/>
            <person name="Sneddon K.M.B."/>
            <person name="Stewart S."/>
            <person name="Sougnez C."/>
            <person name="Stone S.M."/>
            <person name="Topham K."/>
            <person name="Vincent D."/>
            <person name="Wang S."/>
            <person name="Zimmer A.R."/>
            <person name="Birren B.W."/>
            <person name="Hood L."/>
            <person name="Lander E.S."/>
            <person name="Nusbaum C."/>
        </authorList>
    </citation>
    <scope>NUCLEOTIDE SEQUENCE [LARGE SCALE GENOMIC DNA]</scope>
</reference>
<reference key="3">
    <citation type="journal article" date="2004" name="Nat. Genet.">
        <title>Complete sequencing and characterization of 21,243 full-length human cDNAs.</title>
        <authorList>
            <person name="Ota T."/>
            <person name="Suzuki Y."/>
            <person name="Nishikawa T."/>
            <person name="Otsuki T."/>
            <person name="Sugiyama T."/>
            <person name="Irie R."/>
            <person name="Wakamatsu A."/>
            <person name="Hayashi K."/>
            <person name="Sato H."/>
            <person name="Nagai K."/>
            <person name="Kimura K."/>
            <person name="Makita H."/>
            <person name="Sekine M."/>
            <person name="Obayashi M."/>
            <person name="Nishi T."/>
            <person name="Shibahara T."/>
            <person name="Tanaka T."/>
            <person name="Ishii S."/>
            <person name="Yamamoto J."/>
            <person name="Saito K."/>
            <person name="Kawai Y."/>
            <person name="Isono Y."/>
            <person name="Nakamura Y."/>
            <person name="Nagahari K."/>
            <person name="Murakami K."/>
            <person name="Yasuda T."/>
            <person name="Iwayanagi T."/>
            <person name="Wagatsuma M."/>
            <person name="Shiratori A."/>
            <person name="Sudo H."/>
            <person name="Hosoiri T."/>
            <person name="Kaku Y."/>
            <person name="Kodaira H."/>
            <person name="Kondo H."/>
            <person name="Sugawara M."/>
            <person name="Takahashi M."/>
            <person name="Kanda K."/>
            <person name="Yokoi T."/>
            <person name="Furuya T."/>
            <person name="Kikkawa E."/>
            <person name="Omura Y."/>
            <person name="Abe K."/>
            <person name="Kamihara K."/>
            <person name="Katsuta N."/>
            <person name="Sato K."/>
            <person name="Tanikawa M."/>
            <person name="Yamazaki M."/>
            <person name="Ninomiya K."/>
            <person name="Ishibashi T."/>
            <person name="Yamashita H."/>
            <person name="Murakawa K."/>
            <person name="Fujimori K."/>
            <person name="Tanai H."/>
            <person name="Kimata M."/>
            <person name="Watanabe M."/>
            <person name="Hiraoka S."/>
            <person name="Chiba Y."/>
            <person name="Ishida S."/>
            <person name="Ono Y."/>
            <person name="Takiguchi S."/>
            <person name="Watanabe S."/>
            <person name="Yosida M."/>
            <person name="Hotuta T."/>
            <person name="Kusano J."/>
            <person name="Kanehori K."/>
            <person name="Takahashi-Fujii A."/>
            <person name="Hara H."/>
            <person name="Tanase T.-O."/>
            <person name="Nomura Y."/>
            <person name="Togiya S."/>
            <person name="Komai F."/>
            <person name="Hara R."/>
            <person name="Takeuchi K."/>
            <person name="Arita M."/>
            <person name="Imose N."/>
            <person name="Musashino K."/>
            <person name="Yuuki H."/>
            <person name="Oshima A."/>
            <person name="Sasaki N."/>
            <person name="Aotsuka S."/>
            <person name="Yoshikawa Y."/>
            <person name="Matsunawa H."/>
            <person name="Ichihara T."/>
            <person name="Shiohata N."/>
            <person name="Sano S."/>
            <person name="Moriya S."/>
            <person name="Momiyama H."/>
            <person name="Satoh N."/>
            <person name="Takami S."/>
            <person name="Terashima Y."/>
            <person name="Suzuki O."/>
            <person name="Nakagawa S."/>
            <person name="Senoh A."/>
            <person name="Mizoguchi H."/>
            <person name="Goto Y."/>
            <person name="Shimizu F."/>
            <person name="Wakebe H."/>
            <person name="Hishigaki H."/>
            <person name="Watanabe T."/>
            <person name="Sugiyama A."/>
            <person name="Takemoto M."/>
            <person name="Kawakami B."/>
            <person name="Yamazaki M."/>
            <person name="Watanabe K."/>
            <person name="Kumagai A."/>
            <person name="Itakura S."/>
            <person name="Fukuzumi Y."/>
            <person name="Fujimori Y."/>
            <person name="Komiyama M."/>
            <person name="Tashiro H."/>
            <person name="Tanigami A."/>
            <person name="Fujiwara T."/>
            <person name="Ono T."/>
            <person name="Yamada K."/>
            <person name="Fujii Y."/>
            <person name="Ozaki K."/>
            <person name="Hirao M."/>
            <person name="Ohmori Y."/>
            <person name="Kawabata A."/>
            <person name="Hikiji T."/>
            <person name="Kobatake N."/>
            <person name="Inagaki H."/>
            <person name="Ikema Y."/>
            <person name="Okamoto S."/>
            <person name="Okitani R."/>
            <person name="Kawakami T."/>
            <person name="Noguchi S."/>
            <person name="Itoh T."/>
            <person name="Shigeta K."/>
            <person name="Senba T."/>
            <person name="Matsumura K."/>
            <person name="Nakajima Y."/>
            <person name="Mizuno T."/>
            <person name="Morinaga M."/>
            <person name="Sasaki M."/>
            <person name="Togashi T."/>
            <person name="Oyama M."/>
            <person name="Hata H."/>
            <person name="Watanabe M."/>
            <person name="Komatsu T."/>
            <person name="Mizushima-Sugano J."/>
            <person name="Satoh T."/>
            <person name="Shirai Y."/>
            <person name="Takahashi Y."/>
            <person name="Nakagawa K."/>
            <person name="Okumura K."/>
            <person name="Nagase T."/>
            <person name="Nomura N."/>
            <person name="Kikuchi H."/>
            <person name="Masuho Y."/>
            <person name="Yamashita R."/>
            <person name="Nakai K."/>
            <person name="Yada T."/>
            <person name="Nakamura Y."/>
            <person name="Ohara O."/>
            <person name="Isogai T."/>
            <person name="Sugano S."/>
        </authorList>
    </citation>
    <scope>NUCLEOTIDE SEQUENCE [LARGE SCALE MRNA] OF 907-1192</scope>
    <source>
        <tissue>Colon</tissue>
    </source>
</reference>
<reference key="4">
    <citation type="journal article" date="2010" name="J. Biol. Chem.">
        <title>Heteromeric interactions required for abundance and subcellular localization of human CDC50 proteins and class 1 P4-ATPases.</title>
        <authorList>
            <person name="van der Velden L.M."/>
            <person name="Wichers C.G."/>
            <person name="van Breevoort A.E."/>
            <person name="Coleman J.A."/>
            <person name="Molday R.S."/>
            <person name="Berger R."/>
            <person name="Klomp L.W."/>
            <person name="van de Graaf S.F."/>
        </authorList>
    </citation>
    <scope>INTERACTION WITH TMEM30A</scope>
    <scope>SUBCELLULAR LOCATION</scope>
</reference>
<reference key="5">
    <citation type="journal article" date="2010" name="J. Biol. Chem.">
        <title>CDC50 proteins are critical components of the human class-1 P4-ATPase transport machinery.</title>
        <authorList>
            <person name="Bryde S."/>
            <person name="Hennrich H."/>
            <person name="Verhulst P.M."/>
            <person name="Devaux P.F."/>
            <person name="Lenoir G."/>
            <person name="Holthuis J.C."/>
        </authorList>
    </citation>
    <scope>INTERACTION WITH TMEM30A AND TMEM30B</scope>
</reference>
<protein>
    <recommendedName>
        <fullName>Probable phospholipid-transporting ATPase IM</fullName>
        <ecNumber>7.6.2.1</ecNumber>
    </recommendedName>
    <alternativeName>
        <fullName>ATPase class I type 8B member 4</fullName>
    </alternativeName>
    <alternativeName>
        <fullName>P4-ATPase flippase complex alpha subunit ATP8B4</fullName>
    </alternativeName>
</protein>
<proteinExistence type="evidence at protein level"/>